<keyword id="KW-1185">Reference proteome</keyword>
<keyword id="KW-0687">Ribonucleoprotein</keyword>
<keyword id="KW-0689">Ribosomal protein</keyword>
<organism>
    <name type="scientific">Verminephrobacter eiseniae (strain EF01-2)</name>
    <dbReference type="NCBI Taxonomy" id="391735"/>
    <lineage>
        <taxon>Bacteria</taxon>
        <taxon>Pseudomonadati</taxon>
        <taxon>Pseudomonadota</taxon>
        <taxon>Betaproteobacteria</taxon>
        <taxon>Burkholderiales</taxon>
        <taxon>Comamonadaceae</taxon>
        <taxon>Verminephrobacter</taxon>
    </lineage>
</organism>
<evidence type="ECO:0000255" key="1">
    <source>
        <dbReference type="HAMAP-Rule" id="MF_00373"/>
    </source>
</evidence>
<evidence type="ECO:0000305" key="2"/>
<comment type="similarity">
    <text evidence="1">Belongs to the bacterial ribosomal protein bL28 family.</text>
</comment>
<accession>A1WIQ4</accession>
<proteinExistence type="inferred from homology"/>
<sequence>MARVCDVTGKKPMVGNNVSHANNKTRRRFLPNLQYRRFWVETENRWVRLRVSSAALRLIDKNGIDAVLADLRARGQA</sequence>
<name>RL28_VEREI</name>
<feature type="chain" id="PRO_1000007398" description="Large ribosomal subunit protein bL28">
    <location>
        <begin position="1"/>
        <end position="77"/>
    </location>
</feature>
<protein>
    <recommendedName>
        <fullName evidence="1">Large ribosomal subunit protein bL28</fullName>
    </recommendedName>
    <alternativeName>
        <fullName evidence="2">50S ribosomal protein L28</fullName>
    </alternativeName>
</protein>
<reference key="1">
    <citation type="submission" date="2006-12" db="EMBL/GenBank/DDBJ databases">
        <title>Complete sequence of chromosome 1 of Verminephrobacter eiseniae EF01-2.</title>
        <authorList>
            <person name="Copeland A."/>
            <person name="Lucas S."/>
            <person name="Lapidus A."/>
            <person name="Barry K."/>
            <person name="Detter J.C."/>
            <person name="Glavina del Rio T."/>
            <person name="Dalin E."/>
            <person name="Tice H."/>
            <person name="Pitluck S."/>
            <person name="Chertkov O."/>
            <person name="Brettin T."/>
            <person name="Bruce D."/>
            <person name="Han C."/>
            <person name="Tapia R."/>
            <person name="Gilna P."/>
            <person name="Schmutz J."/>
            <person name="Larimer F."/>
            <person name="Land M."/>
            <person name="Hauser L."/>
            <person name="Kyrpides N."/>
            <person name="Kim E."/>
            <person name="Stahl D."/>
            <person name="Richardson P."/>
        </authorList>
    </citation>
    <scope>NUCLEOTIDE SEQUENCE [LARGE SCALE GENOMIC DNA]</scope>
    <source>
        <strain>EF01-2</strain>
    </source>
</reference>
<dbReference type="EMBL" id="CP000542">
    <property type="protein sequence ID" value="ABM57511.1"/>
    <property type="molecule type" value="Genomic_DNA"/>
</dbReference>
<dbReference type="RefSeq" id="WP_011809518.1">
    <property type="nucleotide sequence ID" value="NC_008786.1"/>
</dbReference>
<dbReference type="SMR" id="A1WIQ4"/>
<dbReference type="STRING" id="391735.Veis_1757"/>
<dbReference type="GeneID" id="76460360"/>
<dbReference type="KEGG" id="vei:Veis_1757"/>
<dbReference type="eggNOG" id="COG0227">
    <property type="taxonomic scope" value="Bacteria"/>
</dbReference>
<dbReference type="HOGENOM" id="CLU_064548_3_1_4"/>
<dbReference type="OrthoDB" id="9805609at2"/>
<dbReference type="Proteomes" id="UP000000374">
    <property type="component" value="Chromosome"/>
</dbReference>
<dbReference type="GO" id="GO:0022625">
    <property type="term" value="C:cytosolic large ribosomal subunit"/>
    <property type="evidence" value="ECO:0007669"/>
    <property type="project" value="TreeGrafter"/>
</dbReference>
<dbReference type="GO" id="GO:0003735">
    <property type="term" value="F:structural constituent of ribosome"/>
    <property type="evidence" value="ECO:0007669"/>
    <property type="project" value="InterPro"/>
</dbReference>
<dbReference type="GO" id="GO:0006412">
    <property type="term" value="P:translation"/>
    <property type="evidence" value="ECO:0007669"/>
    <property type="project" value="UniProtKB-UniRule"/>
</dbReference>
<dbReference type="FunFam" id="2.30.170.40:FF:000001">
    <property type="entry name" value="50S ribosomal protein L28"/>
    <property type="match status" value="1"/>
</dbReference>
<dbReference type="Gene3D" id="2.30.170.40">
    <property type="entry name" value="Ribosomal protein L28/L24"/>
    <property type="match status" value="1"/>
</dbReference>
<dbReference type="HAMAP" id="MF_00373">
    <property type="entry name" value="Ribosomal_bL28"/>
    <property type="match status" value="1"/>
</dbReference>
<dbReference type="InterPro" id="IPR026569">
    <property type="entry name" value="Ribosomal_bL28"/>
</dbReference>
<dbReference type="InterPro" id="IPR034704">
    <property type="entry name" value="Ribosomal_bL28/bL31-like_sf"/>
</dbReference>
<dbReference type="InterPro" id="IPR001383">
    <property type="entry name" value="Ribosomal_bL28_bact-type"/>
</dbReference>
<dbReference type="InterPro" id="IPR037147">
    <property type="entry name" value="Ribosomal_bL28_sf"/>
</dbReference>
<dbReference type="NCBIfam" id="TIGR00009">
    <property type="entry name" value="L28"/>
    <property type="match status" value="1"/>
</dbReference>
<dbReference type="PANTHER" id="PTHR13528">
    <property type="entry name" value="39S RIBOSOMAL PROTEIN L28, MITOCHONDRIAL"/>
    <property type="match status" value="1"/>
</dbReference>
<dbReference type="PANTHER" id="PTHR13528:SF2">
    <property type="entry name" value="LARGE RIBOSOMAL SUBUNIT PROTEIN BL28M"/>
    <property type="match status" value="1"/>
</dbReference>
<dbReference type="Pfam" id="PF00830">
    <property type="entry name" value="Ribosomal_L28"/>
    <property type="match status" value="1"/>
</dbReference>
<dbReference type="SUPFAM" id="SSF143800">
    <property type="entry name" value="L28p-like"/>
    <property type="match status" value="1"/>
</dbReference>
<gene>
    <name evidence="1" type="primary">rpmB</name>
    <name type="ordered locus">Veis_1757</name>
</gene>